<dbReference type="EC" id="2.7.7.77" evidence="1"/>
<dbReference type="EMBL" id="CP000090">
    <property type="protein sequence ID" value="AAZ61640.1"/>
    <property type="molecule type" value="Genomic_DNA"/>
</dbReference>
<dbReference type="SMR" id="Q46YZ3"/>
<dbReference type="STRING" id="264198.Reut_A2277"/>
<dbReference type="KEGG" id="reu:Reut_A2277"/>
<dbReference type="eggNOG" id="COG0746">
    <property type="taxonomic scope" value="Bacteria"/>
</dbReference>
<dbReference type="HOGENOM" id="CLU_055597_5_1_4"/>
<dbReference type="OrthoDB" id="9788394at2"/>
<dbReference type="GO" id="GO:0005737">
    <property type="term" value="C:cytoplasm"/>
    <property type="evidence" value="ECO:0007669"/>
    <property type="project" value="UniProtKB-SubCell"/>
</dbReference>
<dbReference type="GO" id="GO:0005525">
    <property type="term" value="F:GTP binding"/>
    <property type="evidence" value="ECO:0007669"/>
    <property type="project" value="UniProtKB-UniRule"/>
</dbReference>
<dbReference type="GO" id="GO:0046872">
    <property type="term" value="F:metal ion binding"/>
    <property type="evidence" value="ECO:0007669"/>
    <property type="project" value="UniProtKB-KW"/>
</dbReference>
<dbReference type="GO" id="GO:0061603">
    <property type="term" value="F:molybdenum cofactor guanylyltransferase activity"/>
    <property type="evidence" value="ECO:0007669"/>
    <property type="project" value="UniProtKB-EC"/>
</dbReference>
<dbReference type="GO" id="GO:1902758">
    <property type="term" value="P:bis(molybdopterin guanine dinucleotide)molybdenum biosynthetic process"/>
    <property type="evidence" value="ECO:0007669"/>
    <property type="project" value="TreeGrafter"/>
</dbReference>
<dbReference type="CDD" id="cd02503">
    <property type="entry name" value="MobA"/>
    <property type="match status" value="1"/>
</dbReference>
<dbReference type="Gene3D" id="3.90.550.10">
    <property type="entry name" value="Spore Coat Polysaccharide Biosynthesis Protein SpsA, Chain A"/>
    <property type="match status" value="1"/>
</dbReference>
<dbReference type="HAMAP" id="MF_00316">
    <property type="entry name" value="MobA"/>
    <property type="match status" value="1"/>
</dbReference>
<dbReference type="InterPro" id="IPR025877">
    <property type="entry name" value="MobA-like_NTP_Trfase"/>
</dbReference>
<dbReference type="InterPro" id="IPR013482">
    <property type="entry name" value="Molybde_CF_guanTrfase"/>
</dbReference>
<dbReference type="InterPro" id="IPR029044">
    <property type="entry name" value="Nucleotide-diphossugar_trans"/>
</dbReference>
<dbReference type="NCBIfam" id="TIGR02665">
    <property type="entry name" value="molyb_mobA"/>
    <property type="match status" value="1"/>
</dbReference>
<dbReference type="PANTHER" id="PTHR19136">
    <property type="entry name" value="MOLYBDENUM COFACTOR GUANYLYLTRANSFERASE"/>
    <property type="match status" value="1"/>
</dbReference>
<dbReference type="PANTHER" id="PTHR19136:SF81">
    <property type="entry name" value="MOLYBDENUM COFACTOR GUANYLYLTRANSFERASE"/>
    <property type="match status" value="1"/>
</dbReference>
<dbReference type="Pfam" id="PF12804">
    <property type="entry name" value="NTP_transf_3"/>
    <property type="match status" value="1"/>
</dbReference>
<dbReference type="SUPFAM" id="SSF53448">
    <property type="entry name" value="Nucleotide-diphospho-sugar transferases"/>
    <property type="match status" value="1"/>
</dbReference>
<sequence>MIARDDITGLILAGGRGSRMGGTDKGLQPLRGTPMAMHTMMRLTPQTGALMINANRNLAAYESFGVPVVTDSVPDFAGPLAGMLAGLEQCQTGWMVTAPCDSPFLPADLVPRLAQAIEAEGAELAIPVTVDTDGRRQLQPVFCLMPVSMLDDLIAYLNGGGRKIETWATSHRLAEVLFDDAGAFANINTLDELRTHEAG</sequence>
<evidence type="ECO:0000255" key="1">
    <source>
        <dbReference type="HAMAP-Rule" id="MF_00316"/>
    </source>
</evidence>
<accession>Q46YZ3</accession>
<name>MOBA_CUPPJ</name>
<reference key="1">
    <citation type="journal article" date="2010" name="PLoS ONE">
        <title>The complete multipartite genome sequence of Cupriavidus necator JMP134, a versatile pollutant degrader.</title>
        <authorList>
            <person name="Lykidis A."/>
            <person name="Perez-Pantoja D."/>
            <person name="Ledger T."/>
            <person name="Mavromatis K."/>
            <person name="Anderson I.J."/>
            <person name="Ivanova N.N."/>
            <person name="Hooper S.D."/>
            <person name="Lapidus A."/>
            <person name="Lucas S."/>
            <person name="Gonzalez B."/>
            <person name="Kyrpides N.C."/>
        </authorList>
    </citation>
    <scope>NUCLEOTIDE SEQUENCE [LARGE SCALE GENOMIC DNA]</scope>
    <source>
        <strain>JMP134 / LMG 1197</strain>
    </source>
</reference>
<comment type="function">
    <text evidence="1">Transfers a GMP moiety from GTP to Mo-molybdopterin (Mo-MPT) cofactor (Moco or molybdenum cofactor) to form Mo-molybdopterin guanine dinucleotide (Mo-MGD) cofactor.</text>
</comment>
<comment type="catalytic activity">
    <reaction evidence="1">
        <text>Mo-molybdopterin + GTP + H(+) = Mo-molybdopterin guanine dinucleotide + diphosphate</text>
        <dbReference type="Rhea" id="RHEA:34243"/>
        <dbReference type="ChEBI" id="CHEBI:15378"/>
        <dbReference type="ChEBI" id="CHEBI:33019"/>
        <dbReference type="ChEBI" id="CHEBI:37565"/>
        <dbReference type="ChEBI" id="CHEBI:71302"/>
        <dbReference type="ChEBI" id="CHEBI:71310"/>
        <dbReference type="EC" id="2.7.7.77"/>
    </reaction>
</comment>
<comment type="cofactor">
    <cofactor evidence="1">
        <name>Mg(2+)</name>
        <dbReference type="ChEBI" id="CHEBI:18420"/>
    </cofactor>
</comment>
<comment type="subunit">
    <text evidence="1">Monomer.</text>
</comment>
<comment type="subcellular location">
    <subcellularLocation>
        <location evidence="1">Cytoplasm</location>
    </subcellularLocation>
</comment>
<comment type="domain">
    <text evidence="1">The N-terminal domain determines nucleotide recognition and specific binding, while the C-terminal domain determines the specific binding to the target protein.</text>
</comment>
<comment type="similarity">
    <text evidence="1">Belongs to the MobA family.</text>
</comment>
<keyword id="KW-0963">Cytoplasm</keyword>
<keyword id="KW-0342">GTP-binding</keyword>
<keyword id="KW-0460">Magnesium</keyword>
<keyword id="KW-0479">Metal-binding</keyword>
<keyword id="KW-0501">Molybdenum cofactor biosynthesis</keyword>
<keyword id="KW-0547">Nucleotide-binding</keyword>
<keyword id="KW-0808">Transferase</keyword>
<protein>
    <recommendedName>
        <fullName evidence="1">Molybdenum cofactor guanylyltransferase</fullName>
        <shortName evidence="1">MoCo guanylyltransferase</shortName>
        <ecNumber evidence="1">2.7.7.77</ecNumber>
    </recommendedName>
    <alternativeName>
        <fullName evidence="1">GTP:molybdopterin guanylyltransferase</fullName>
    </alternativeName>
    <alternativeName>
        <fullName evidence="1">Mo-MPT guanylyltransferase</fullName>
    </alternativeName>
    <alternativeName>
        <fullName evidence="1">Molybdopterin guanylyltransferase</fullName>
    </alternativeName>
    <alternativeName>
        <fullName evidence="1">Molybdopterin-guanine dinucleotide synthase</fullName>
        <shortName evidence="1">MGD synthase</shortName>
    </alternativeName>
</protein>
<feature type="chain" id="PRO_1000019138" description="Molybdenum cofactor guanylyltransferase">
    <location>
        <begin position="1"/>
        <end position="199"/>
    </location>
</feature>
<feature type="binding site" evidence="1">
    <location>
        <begin position="12"/>
        <end position="14"/>
    </location>
    <ligand>
        <name>GTP</name>
        <dbReference type="ChEBI" id="CHEBI:37565"/>
    </ligand>
</feature>
<feature type="binding site" evidence="1">
    <location>
        <position position="25"/>
    </location>
    <ligand>
        <name>GTP</name>
        <dbReference type="ChEBI" id="CHEBI:37565"/>
    </ligand>
</feature>
<feature type="binding site" evidence="1">
    <location>
        <position position="53"/>
    </location>
    <ligand>
        <name>GTP</name>
        <dbReference type="ChEBI" id="CHEBI:37565"/>
    </ligand>
</feature>
<feature type="binding site" evidence="1">
    <location>
        <position position="71"/>
    </location>
    <ligand>
        <name>GTP</name>
        <dbReference type="ChEBI" id="CHEBI:37565"/>
    </ligand>
</feature>
<feature type="binding site" evidence="1">
    <location>
        <position position="101"/>
    </location>
    <ligand>
        <name>GTP</name>
        <dbReference type="ChEBI" id="CHEBI:37565"/>
    </ligand>
</feature>
<feature type="binding site" evidence="1">
    <location>
        <position position="101"/>
    </location>
    <ligand>
        <name>Mg(2+)</name>
        <dbReference type="ChEBI" id="CHEBI:18420"/>
    </ligand>
</feature>
<gene>
    <name evidence="1" type="primary">mobA</name>
    <name type="ordered locus">Reut_A2277</name>
</gene>
<proteinExistence type="inferred from homology"/>
<organism>
    <name type="scientific">Cupriavidus pinatubonensis (strain JMP 134 / LMG 1197)</name>
    <name type="common">Cupriavidus necator (strain JMP 134)</name>
    <dbReference type="NCBI Taxonomy" id="264198"/>
    <lineage>
        <taxon>Bacteria</taxon>
        <taxon>Pseudomonadati</taxon>
        <taxon>Pseudomonadota</taxon>
        <taxon>Betaproteobacteria</taxon>
        <taxon>Burkholderiales</taxon>
        <taxon>Burkholderiaceae</taxon>
        <taxon>Cupriavidus</taxon>
    </lineage>
</organism>